<name>ZN432_HUMAN</name>
<organism>
    <name type="scientific">Homo sapiens</name>
    <name type="common">Human</name>
    <dbReference type="NCBI Taxonomy" id="9606"/>
    <lineage>
        <taxon>Eukaryota</taxon>
        <taxon>Metazoa</taxon>
        <taxon>Chordata</taxon>
        <taxon>Craniata</taxon>
        <taxon>Vertebrata</taxon>
        <taxon>Euteleostomi</taxon>
        <taxon>Mammalia</taxon>
        <taxon>Eutheria</taxon>
        <taxon>Euarchontoglires</taxon>
        <taxon>Primates</taxon>
        <taxon>Haplorrhini</taxon>
        <taxon>Catarrhini</taxon>
        <taxon>Hominidae</taxon>
        <taxon>Homo</taxon>
    </lineage>
</organism>
<protein>
    <recommendedName>
        <fullName>Zinc finger protein 432</fullName>
    </recommendedName>
</protein>
<sequence>MINAQELLTLEDVTVEFTWEEWQLLGPFQKDLYRDVMLEIYSNLLSMGYQVSKPDALSKLERGEEPWTMEDERHSRICPENNEVDDHLQDHLENQRMLKSVEQYHEHNAFGNTASQTKSLCLFRENHDTFELYIKTLKSNLSLVNQNKSCEINNSTKFSGDGKSFLHGNYEELYSAAKFSVSTKANSTKSQVSKHQRTHEIEKNHVCSECGKAFVKKSQLTDHERVHTGEKPYGCTLCAKVFSRKSRLNEHQRIHKREKSFICSECGKVFTMKSRLIEHQRTHTGEKPYICNECGKGFPGKRNLIVHQRNHTGEKSYICSECGKGFTGKSMLIIHQRTHTGEKPYICSECGKGFTTKHYVIIHQRNHTGEKPYICNECGKGFTMKSRMIEHQRTHTGEKPYICSECGKGFPRKSNLIVHQRNHTVEKSYLCSECGKGFTVKSMLIIHQRTHTGEKPYTCSECGKGFPLKSRLIVHQRTHTGEKPYRCSECGKGFIVNSGLMLHQRTHTGEKPYICNECGKGFAFKSNLVVHQRTHTGEKPFMCSECGKGFTMKRYLIVHQQIHTEEKSCICSECGRGFAKETELALHKQVHTGEKPYGCNECGKGFTMKSRLIVHQRTHTGEKPFVCSECRKAFSSKRNLIVHQRTHNGNKP</sequence>
<accession>O94892</accession>
<proteinExistence type="evidence at protein level"/>
<keyword id="KW-0013">ADP-ribosylation</keyword>
<keyword id="KW-0238">DNA-binding</keyword>
<keyword id="KW-0479">Metal-binding</keyword>
<keyword id="KW-0944">Nitration</keyword>
<keyword id="KW-0539">Nucleus</keyword>
<keyword id="KW-1267">Proteomics identification</keyword>
<keyword id="KW-1185">Reference proteome</keyword>
<keyword id="KW-0677">Repeat</keyword>
<keyword id="KW-0804">Transcription</keyword>
<keyword id="KW-0805">Transcription regulation</keyword>
<keyword id="KW-0862">Zinc</keyword>
<keyword id="KW-0863">Zinc-finger</keyword>
<dbReference type="EMBL" id="AB018341">
    <property type="protein sequence ID" value="BAA34518.2"/>
    <property type="status" value="ALT_INIT"/>
    <property type="molecule type" value="mRNA"/>
</dbReference>
<dbReference type="EMBL" id="BC002858">
    <property type="protein sequence ID" value="AAH02858.1"/>
    <property type="molecule type" value="mRNA"/>
</dbReference>
<dbReference type="CCDS" id="CCDS12848.1"/>
<dbReference type="RefSeq" id="NP_001309213.1">
    <property type="nucleotide sequence ID" value="NM_001322284.2"/>
</dbReference>
<dbReference type="RefSeq" id="NP_001309214.1">
    <property type="nucleotide sequence ID" value="NM_001322285.1"/>
</dbReference>
<dbReference type="RefSeq" id="NP_055465.1">
    <property type="nucleotide sequence ID" value="NM_014650.4"/>
</dbReference>
<dbReference type="SMR" id="O94892"/>
<dbReference type="BioGRID" id="115023">
    <property type="interactions" value="7"/>
</dbReference>
<dbReference type="FunCoup" id="O94892">
    <property type="interactions" value="475"/>
</dbReference>
<dbReference type="IntAct" id="O94892">
    <property type="interactions" value="6"/>
</dbReference>
<dbReference type="STRING" id="9606.ENSP00000221315"/>
<dbReference type="GlyConnect" id="2092">
    <property type="glycosylation" value="1 N-Linked glycan (1 site)"/>
</dbReference>
<dbReference type="GlyCosmos" id="O94892">
    <property type="glycosylation" value="1 site, 2 glycans"/>
</dbReference>
<dbReference type="GlyGen" id="O94892">
    <property type="glycosylation" value="1 site, 2 N-linked glycans (1 site)"/>
</dbReference>
<dbReference type="iPTMnet" id="O94892"/>
<dbReference type="PhosphoSitePlus" id="O94892"/>
<dbReference type="BioMuta" id="ZNF432"/>
<dbReference type="jPOST" id="O94892"/>
<dbReference type="MassIVE" id="O94892"/>
<dbReference type="PaxDb" id="9606-ENSP00000470488"/>
<dbReference type="PeptideAtlas" id="O94892"/>
<dbReference type="ProteomicsDB" id="50529"/>
<dbReference type="Antibodypedia" id="56944">
    <property type="antibodies" value="82 antibodies from 13 providers"/>
</dbReference>
<dbReference type="DNASU" id="9668"/>
<dbReference type="Ensembl" id="ENST00000221315.10">
    <property type="protein sequence ID" value="ENSP00000221315.4"/>
    <property type="gene ID" value="ENSG00000256087.7"/>
</dbReference>
<dbReference type="Ensembl" id="ENST00000594154.5">
    <property type="protein sequence ID" value="ENSP00000470488.1"/>
    <property type="gene ID" value="ENSG00000256087.7"/>
</dbReference>
<dbReference type="GeneID" id="9668"/>
<dbReference type="KEGG" id="hsa:9668"/>
<dbReference type="MANE-Select" id="ENST00000221315.10">
    <property type="protein sequence ID" value="ENSP00000221315.4"/>
    <property type="RefSeq nucleotide sequence ID" value="NM_014650.4"/>
    <property type="RefSeq protein sequence ID" value="NP_055465.1"/>
</dbReference>
<dbReference type="UCSC" id="uc002pyk.4">
    <property type="organism name" value="human"/>
</dbReference>
<dbReference type="AGR" id="HGNC:20810"/>
<dbReference type="CTD" id="9668"/>
<dbReference type="DisGeNET" id="9668"/>
<dbReference type="GeneCards" id="ZNF432"/>
<dbReference type="HGNC" id="HGNC:20810">
    <property type="gene designation" value="ZNF432"/>
</dbReference>
<dbReference type="HPA" id="ENSG00000256087">
    <property type="expression patterns" value="Low tissue specificity"/>
</dbReference>
<dbReference type="MIM" id="620554">
    <property type="type" value="gene"/>
</dbReference>
<dbReference type="neXtProt" id="NX_O94892"/>
<dbReference type="OpenTargets" id="ENSG00000256087"/>
<dbReference type="PharmGKB" id="PA134935907"/>
<dbReference type="VEuPathDB" id="HostDB:ENSG00000256087"/>
<dbReference type="eggNOG" id="KOG1721">
    <property type="taxonomic scope" value="Eukaryota"/>
</dbReference>
<dbReference type="GeneTree" id="ENSGT00940000163119"/>
<dbReference type="HOGENOM" id="CLU_002678_44_5_1"/>
<dbReference type="InParanoid" id="O94892"/>
<dbReference type="OMA" id="HEDFHSA"/>
<dbReference type="OrthoDB" id="9411774at2759"/>
<dbReference type="PAN-GO" id="O94892">
    <property type="GO annotations" value="4 GO annotations based on evolutionary models"/>
</dbReference>
<dbReference type="PhylomeDB" id="O94892"/>
<dbReference type="TreeFam" id="TF350804"/>
<dbReference type="PathwayCommons" id="O94892"/>
<dbReference type="Reactome" id="R-HSA-212436">
    <property type="pathway name" value="Generic Transcription Pathway"/>
</dbReference>
<dbReference type="SignaLink" id="O94892"/>
<dbReference type="BioGRID-ORCS" id="9668">
    <property type="hits" value="10 hits in 1177 CRISPR screens"/>
</dbReference>
<dbReference type="ChiTaRS" id="ZNF432">
    <property type="organism name" value="human"/>
</dbReference>
<dbReference type="GenomeRNAi" id="9668"/>
<dbReference type="Pharos" id="O94892">
    <property type="development level" value="Tdark"/>
</dbReference>
<dbReference type="PRO" id="PR:O94892"/>
<dbReference type="Proteomes" id="UP000005640">
    <property type="component" value="Chromosome 19"/>
</dbReference>
<dbReference type="RNAct" id="O94892">
    <property type="molecule type" value="protein"/>
</dbReference>
<dbReference type="Bgee" id="ENSG00000256087">
    <property type="expression patterns" value="Expressed in endothelial cell and 195 other cell types or tissues"/>
</dbReference>
<dbReference type="ExpressionAtlas" id="O94892">
    <property type="expression patterns" value="baseline and differential"/>
</dbReference>
<dbReference type="GO" id="GO:0005654">
    <property type="term" value="C:nucleoplasm"/>
    <property type="evidence" value="ECO:0000314"/>
    <property type="project" value="HPA"/>
</dbReference>
<dbReference type="GO" id="GO:0005634">
    <property type="term" value="C:nucleus"/>
    <property type="evidence" value="ECO:0000314"/>
    <property type="project" value="UniProtKB"/>
</dbReference>
<dbReference type="GO" id="GO:0003684">
    <property type="term" value="F:damaged DNA binding"/>
    <property type="evidence" value="ECO:0000314"/>
    <property type="project" value="UniProtKB"/>
</dbReference>
<dbReference type="GO" id="GO:0030674">
    <property type="term" value="F:protein-macromolecule adaptor activity"/>
    <property type="evidence" value="ECO:0000314"/>
    <property type="project" value="UniProtKB"/>
</dbReference>
<dbReference type="GO" id="GO:0008270">
    <property type="term" value="F:zinc ion binding"/>
    <property type="evidence" value="ECO:0007669"/>
    <property type="project" value="UniProtKB-KW"/>
</dbReference>
<dbReference type="GO" id="GO:0006974">
    <property type="term" value="P:DNA damage response"/>
    <property type="evidence" value="ECO:0000314"/>
    <property type="project" value="UniProtKB"/>
</dbReference>
<dbReference type="GO" id="GO:0006355">
    <property type="term" value="P:regulation of DNA-templated transcription"/>
    <property type="evidence" value="ECO:0007669"/>
    <property type="project" value="InterPro"/>
</dbReference>
<dbReference type="CDD" id="cd07765">
    <property type="entry name" value="KRAB_A-box"/>
    <property type="match status" value="1"/>
</dbReference>
<dbReference type="FunFam" id="3.30.160.60:FF:000029">
    <property type="entry name" value="GLI family zinc finger 4"/>
    <property type="match status" value="1"/>
</dbReference>
<dbReference type="FunFam" id="3.30.160.60:FF:002063">
    <property type="entry name" value="RB associated KRAB zinc finger"/>
    <property type="match status" value="1"/>
</dbReference>
<dbReference type="FunFam" id="3.30.160.60:FF:000478">
    <property type="entry name" value="Zinc finger protein 133"/>
    <property type="match status" value="1"/>
</dbReference>
<dbReference type="FunFam" id="3.30.160.60:FF:000155">
    <property type="entry name" value="zinc finger protein 133 isoform X1"/>
    <property type="match status" value="1"/>
</dbReference>
<dbReference type="FunFam" id="3.30.160.60:FF:000006">
    <property type="entry name" value="Zinc finger protein 184 (Kruppel-like)"/>
    <property type="match status" value="1"/>
</dbReference>
<dbReference type="FunFam" id="3.30.160.60:FF:000295">
    <property type="entry name" value="zinc finger protein 19"/>
    <property type="match status" value="1"/>
</dbReference>
<dbReference type="FunFam" id="3.30.160.60:FF:002343">
    <property type="entry name" value="Zinc finger protein 33A"/>
    <property type="match status" value="2"/>
</dbReference>
<dbReference type="FunFam" id="3.30.160.60:FF:000848">
    <property type="entry name" value="Zinc finger protein 35"/>
    <property type="match status" value="2"/>
</dbReference>
<dbReference type="FunFam" id="3.30.160.60:FF:000016">
    <property type="entry name" value="zinc finger protein 37 homolog"/>
    <property type="match status" value="1"/>
</dbReference>
<dbReference type="FunFam" id="3.30.160.60:FF:002016">
    <property type="entry name" value="Zinc finger protein 432"/>
    <property type="match status" value="1"/>
</dbReference>
<dbReference type="FunFam" id="3.30.160.60:FF:000069">
    <property type="entry name" value="Zinc finger protein 572"/>
    <property type="match status" value="2"/>
</dbReference>
<dbReference type="FunFam" id="3.30.160.60:FF:001672">
    <property type="entry name" value="Zinc finger protein 614"/>
    <property type="match status" value="1"/>
</dbReference>
<dbReference type="FunFam" id="3.30.160.60:FF:000564">
    <property type="entry name" value="zinc finger protein 699"/>
    <property type="match status" value="1"/>
</dbReference>
<dbReference type="Gene3D" id="6.10.140.140">
    <property type="match status" value="1"/>
</dbReference>
<dbReference type="Gene3D" id="3.30.160.60">
    <property type="entry name" value="Classic Zinc Finger"/>
    <property type="match status" value="16"/>
</dbReference>
<dbReference type="InterPro" id="IPR001909">
    <property type="entry name" value="KRAB"/>
</dbReference>
<dbReference type="InterPro" id="IPR036051">
    <property type="entry name" value="KRAB_dom_sf"/>
</dbReference>
<dbReference type="InterPro" id="IPR036236">
    <property type="entry name" value="Znf_C2H2_sf"/>
</dbReference>
<dbReference type="InterPro" id="IPR013087">
    <property type="entry name" value="Znf_C2H2_type"/>
</dbReference>
<dbReference type="PANTHER" id="PTHR24408:SF65">
    <property type="entry name" value="C2H2-TYPE DOMAIN-CONTAINING PROTEIN"/>
    <property type="match status" value="1"/>
</dbReference>
<dbReference type="PANTHER" id="PTHR24408">
    <property type="entry name" value="ZINC FINGER PROTEIN"/>
    <property type="match status" value="1"/>
</dbReference>
<dbReference type="Pfam" id="PF01352">
    <property type="entry name" value="KRAB"/>
    <property type="match status" value="1"/>
</dbReference>
<dbReference type="Pfam" id="PF00096">
    <property type="entry name" value="zf-C2H2"/>
    <property type="match status" value="15"/>
</dbReference>
<dbReference type="SMART" id="SM00349">
    <property type="entry name" value="KRAB"/>
    <property type="match status" value="1"/>
</dbReference>
<dbReference type="SMART" id="SM00355">
    <property type="entry name" value="ZnF_C2H2"/>
    <property type="match status" value="16"/>
</dbReference>
<dbReference type="SUPFAM" id="SSF57667">
    <property type="entry name" value="beta-beta-alpha zinc fingers"/>
    <property type="match status" value="9"/>
</dbReference>
<dbReference type="SUPFAM" id="SSF109640">
    <property type="entry name" value="KRAB domain (Kruppel-associated box)"/>
    <property type="match status" value="1"/>
</dbReference>
<dbReference type="PROSITE" id="PS50805">
    <property type="entry name" value="KRAB"/>
    <property type="match status" value="1"/>
</dbReference>
<dbReference type="PROSITE" id="PS00028">
    <property type="entry name" value="ZINC_FINGER_C2H2_1"/>
    <property type="match status" value="16"/>
</dbReference>
<dbReference type="PROSITE" id="PS50157">
    <property type="entry name" value="ZINC_FINGER_C2H2_2"/>
    <property type="match status" value="16"/>
</dbReference>
<comment type="function">
    <text evidence="4">Homologous recombination repressor that functions as a poly(ADP-ribose) (PAR) reader regulating DNA damage response and PARP inhibition. Once recruited to DNA lesions via DNA-, in a PAR-dependent mechanism, stimulates PARP1 activity (PubMed:37823600). Binds preferentially ssDNA and inhibits EXO1-mediated resection, probably through a PAR-independent DNA-binding mechanism (PubMed:37823600).</text>
</comment>
<comment type="subunit">
    <text evidence="4">Interacts with PARP1 and several chromatin remodeling proteins; the interaction with PARP1 reshapes ZNF432 interacting proteins (PubMed:37823600). Interacts with TRIM28; the interaction is independent of PARP1 (PubMed:37823600).</text>
</comment>
<comment type="interaction">
    <interactant intactId="EBI-12121104">
        <id>O94892</id>
    </interactant>
    <interactant intactId="EBI-10303987">
        <id>Q9UHG0</id>
        <label>DCDC2</label>
    </interactant>
    <organismsDiffer>false</organismsDiffer>
    <experiments>3</experiments>
</comment>
<comment type="subcellular location">
    <subcellularLocation>
        <location evidence="4">Nucleus</location>
    </subcellularLocation>
    <text evidence="4">Excluded from nucleolus (PubMed:37823600). Responds to DNA damage by relocating to damage sites, this relocation is PAR-dependent (PubMed:37823600).</text>
</comment>
<comment type="similarity">
    <text evidence="5">Belongs to the krueppel C2H2-type zinc-finger protein family.</text>
</comment>
<comment type="sequence caution" evidence="5">
    <conflict type="erroneous initiation">
        <sequence resource="EMBL-CDS" id="BAA34518"/>
    </conflict>
    <text>Extended N-terminus.</text>
</comment>
<reference key="1">
    <citation type="journal article" date="1998" name="DNA Res.">
        <title>Prediction of the coding sequences of unidentified human genes. XI. The complete sequences of 100 new cDNA clones from brain which code for large proteins in vitro.</title>
        <authorList>
            <person name="Nagase T."/>
            <person name="Ishikawa K."/>
            <person name="Suyama M."/>
            <person name="Kikuno R."/>
            <person name="Miyajima N."/>
            <person name="Tanaka A."/>
            <person name="Kotani H."/>
            <person name="Nomura N."/>
            <person name="Ohara O."/>
        </authorList>
    </citation>
    <scope>NUCLEOTIDE SEQUENCE [LARGE SCALE MRNA]</scope>
    <source>
        <tissue>Brain</tissue>
    </source>
</reference>
<reference key="2">
    <citation type="journal article" date="2004" name="Genome Res.">
        <title>The status, quality, and expansion of the NIH full-length cDNA project: the Mammalian Gene Collection (MGC).</title>
        <authorList>
            <consortium name="The MGC Project Team"/>
        </authorList>
    </citation>
    <scope>NUCLEOTIDE SEQUENCE [LARGE SCALE MRNA]</scope>
    <source>
        <tissue>Placenta</tissue>
    </source>
</reference>
<reference key="3">
    <citation type="journal article" date="2006" name="Anal. Biochem.">
        <title>Nitroproteins from a human pituitary adenoma tissue discovered with a nitrotyrosine affinity column and tandem mass spectrometry.</title>
        <authorList>
            <person name="Zhan X."/>
            <person name="Desiderio D.M."/>
        </authorList>
    </citation>
    <scope>NITRATION [LARGE SCALE ANALYSIS] AT TYR-41</scope>
    <scope>IDENTIFICATION BY MASS SPECTROMETRY [LARGE SCALE ANALYSIS]</scope>
    <source>
        <tissue>Pituitary adenoma</tissue>
    </source>
</reference>
<reference key="4">
    <citation type="journal article" date="2006" name="Science">
        <title>The consensus coding sequences of human breast and colorectal cancers.</title>
        <authorList>
            <person name="Sjoeblom T."/>
            <person name="Jones S."/>
            <person name="Wood L.D."/>
            <person name="Parsons D.W."/>
            <person name="Lin J."/>
            <person name="Barber T.D."/>
            <person name="Mandelker D."/>
            <person name="Leary R.J."/>
            <person name="Ptak J."/>
            <person name="Silliman N."/>
            <person name="Szabo S."/>
            <person name="Buckhaults P."/>
            <person name="Farrell C."/>
            <person name="Meeh P."/>
            <person name="Markowitz S.D."/>
            <person name="Willis J."/>
            <person name="Dawson D."/>
            <person name="Willson J.K.V."/>
            <person name="Gazdar A.F."/>
            <person name="Hartigan J."/>
            <person name="Wu L."/>
            <person name="Liu C."/>
            <person name="Parmigiani G."/>
            <person name="Park B.H."/>
            <person name="Bachman K.E."/>
            <person name="Papadopoulos N."/>
            <person name="Vogelstein B."/>
            <person name="Kinzler K.W."/>
            <person name="Velculescu V.E."/>
        </authorList>
    </citation>
    <scope>VARIANTS [LARGE SCALE ANALYSIS] VAL-416 AND TYR-490</scope>
</reference>
<reference key="5">
    <citation type="journal article" date="2023" name="Nucleic Acids Res.">
        <title>ZNF432 stimulates PARylation and inhibits DNA resection to balance PARPi sensitivity and resistance.</title>
        <authorList>
            <person name="O'Sullivan J."/>
            <person name="Kothari C."/>
            <person name="Caron M.C."/>
            <person name="Gagne J.P."/>
            <person name="Jin Z."/>
            <person name="Nonfoux L."/>
            <person name="Beneyton A."/>
            <person name="Coulombe Y."/>
            <person name="Thomas M."/>
            <person name="Atalay N."/>
            <person name="Meng X.W."/>
            <person name="Milano L."/>
            <person name="Jean D."/>
            <person name="Boisvert F.M."/>
            <person name="Kaufmann S.H."/>
            <person name="Hendzel M.J."/>
            <person name="Masson J.Y."/>
            <person name="Poirier G.G."/>
        </authorList>
    </citation>
    <scope>FUNCTION</scope>
    <scope>SUBCELLULAR LOCATION</scope>
    <scope>ADP-RIBOSYLATION AT SER-139; SER-164; SER-246; SER-330 AND SER-414</scope>
    <scope>INTERACTION WITH PARP1 AND TRIM28</scope>
</reference>
<evidence type="ECO:0000255" key="1">
    <source>
        <dbReference type="PROSITE-ProRule" id="PRU00042"/>
    </source>
</evidence>
<evidence type="ECO:0000255" key="2">
    <source>
        <dbReference type="PROSITE-ProRule" id="PRU00119"/>
    </source>
</evidence>
<evidence type="ECO:0000269" key="3">
    <source>
    </source>
</evidence>
<evidence type="ECO:0000269" key="4">
    <source>
    </source>
</evidence>
<evidence type="ECO:0000305" key="5"/>
<evidence type="ECO:0000305" key="6">
    <source>
    </source>
</evidence>
<evidence type="ECO:0000312" key="7">
    <source>
        <dbReference type="HGNC" id="HGNC:20810"/>
    </source>
</evidence>
<evidence type="ECO:0007744" key="8">
    <source>
    </source>
</evidence>
<feature type="chain" id="PRO_0000047580" description="Zinc finger protein 432">
    <location>
        <begin position="1"/>
        <end position="652"/>
    </location>
</feature>
<feature type="domain" description="KRAB" evidence="2">
    <location>
        <begin position="8"/>
        <end position="79"/>
    </location>
</feature>
<feature type="zinc finger region" description="C2H2-type 1" evidence="1">
    <location>
        <begin position="205"/>
        <end position="227"/>
    </location>
</feature>
<feature type="zinc finger region" description="C2H2-type 2" evidence="1">
    <location>
        <begin position="233"/>
        <end position="255"/>
    </location>
</feature>
<feature type="zinc finger region" description="C2H2-type 3" evidence="1">
    <location>
        <begin position="261"/>
        <end position="283"/>
    </location>
</feature>
<feature type="zinc finger region" description="C2H2-type 4" evidence="1">
    <location>
        <begin position="289"/>
        <end position="311"/>
    </location>
</feature>
<feature type="zinc finger region" description="C2H2-type 5" evidence="1">
    <location>
        <begin position="317"/>
        <end position="339"/>
    </location>
</feature>
<feature type="zinc finger region" description="C2H2-type 6" evidence="1">
    <location>
        <begin position="345"/>
        <end position="367"/>
    </location>
</feature>
<feature type="zinc finger region" description="C2H2-type 7" evidence="1">
    <location>
        <begin position="373"/>
        <end position="395"/>
    </location>
</feature>
<feature type="zinc finger region" description="C2H2-type 8" evidence="1">
    <location>
        <begin position="401"/>
        <end position="423"/>
    </location>
</feature>
<feature type="zinc finger region" description="C2H2-type 9" evidence="1">
    <location>
        <begin position="429"/>
        <end position="451"/>
    </location>
</feature>
<feature type="zinc finger region" description="C2H2-type 10" evidence="1">
    <location>
        <begin position="457"/>
        <end position="479"/>
    </location>
</feature>
<feature type="zinc finger region" description="C2H2-type 11" evidence="1">
    <location>
        <begin position="485"/>
        <end position="507"/>
    </location>
</feature>
<feature type="zinc finger region" description="C2H2-type 12" evidence="1">
    <location>
        <begin position="513"/>
        <end position="535"/>
    </location>
</feature>
<feature type="zinc finger region" description="C2H2-type 13" evidence="1">
    <location>
        <begin position="541"/>
        <end position="563"/>
    </location>
</feature>
<feature type="zinc finger region" description="C2H2-type 14" evidence="1">
    <location>
        <begin position="567"/>
        <end position="591"/>
    </location>
</feature>
<feature type="zinc finger region" description="C2H2-type 15" evidence="1">
    <location>
        <begin position="597"/>
        <end position="619"/>
    </location>
</feature>
<feature type="zinc finger region" description="C2H2-type 16" evidence="1">
    <location>
        <begin position="625"/>
        <end position="647"/>
    </location>
</feature>
<feature type="modified residue" description="3'-nitrotyrosine" evidence="8">
    <location>
        <position position="41"/>
    </location>
</feature>
<feature type="modified residue" description="ADP-ribosylserine" evidence="6">
    <location>
        <position position="139"/>
    </location>
</feature>
<feature type="modified residue" description="ADP-ribosylserine" evidence="6">
    <location>
        <position position="164"/>
    </location>
</feature>
<feature type="modified residue" description="ADP-ribosylserine" evidence="6">
    <location>
        <position position="246"/>
    </location>
</feature>
<feature type="modified residue" description="ADP-ribosylserine" evidence="6">
    <location>
        <position position="330"/>
    </location>
</feature>
<feature type="modified residue" description="ADP-ribosylserine" evidence="6">
    <location>
        <position position="414"/>
    </location>
</feature>
<feature type="sequence variant" id="VAR_035577" description="In a breast cancer sample; somatic mutation." evidence="3">
    <original>L</original>
    <variation>V</variation>
    <location>
        <position position="416"/>
    </location>
</feature>
<feature type="sequence variant" id="VAR_035578" description="In a breast cancer sample; somatic mutation; dbSNP:rs755035378." evidence="3">
    <original>C</original>
    <variation>Y</variation>
    <location>
        <position position="490"/>
    </location>
</feature>
<gene>
    <name evidence="7" type="primary">ZNF432</name>
    <name type="synonym">KIAA0798</name>
</gene>